<feature type="chain" id="PRO_1000016569" description="tRNA uridine 5-carboxymethylaminomethyl modification enzyme MnmG">
    <location>
        <begin position="1"/>
        <end position="656"/>
    </location>
</feature>
<feature type="region of interest" description="Disordered" evidence="2">
    <location>
        <begin position="636"/>
        <end position="656"/>
    </location>
</feature>
<feature type="binding site" evidence="1">
    <location>
        <begin position="13"/>
        <end position="18"/>
    </location>
    <ligand>
        <name>FAD</name>
        <dbReference type="ChEBI" id="CHEBI:57692"/>
    </ligand>
</feature>
<feature type="binding site" evidence="1">
    <location>
        <begin position="274"/>
        <end position="288"/>
    </location>
    <ligand>
        <name>NAD(+)</name>
        <dbReference type="ChEBI" id="CHEBI:57540"/>
    </ligand>
</feature>
<proteinExistence type="inferred from homology"/>
<name>MNMG_BURL3</name>
<keyword id="KW-0963">Cytoplasm</keyword>
<keyword id="KW-0274">FAD</keyword>
<keyword id="KW-0285">Flavoprotein</keyword>
<keyword id="KW-0520">NAD</keyword>
<keyword id="KW-0819">tRNA processing</keyword>
<comment type="function">
    <text evidence="1">NAD-binding protein involved in the addition of a carboxymethylaminomethyl (cmnm) group at the wobble position (U34) of certain tRNAs, forming tRNA-cmnm(5)s(2)U34.</text>
</comment>
<comment type="cofactor">
    <cofactor evidence="1">
        <name>FAD</name>
        <dbReference type="ChEBI" id="CHEBI:57692"/>
    </cofactor>
</comment>
<comment type="subunit">
    <text evidence="1">Homodimer. Heterotetramer of two MnmE and two MnmG subunits.</text>
</comment>
<comment type="subcellular location">
    <subcellularLocation>
        <location evidence="1">Cytoplasm</location>
    </subcellularLocation>
</comment>
<comment type="similarity">
    <text evidence="1">Belongs to the MnmG family.</text>
</comment>
<dbReference type="EMBL" id="CP000151">
    <property type="protein sequence ID" value="ABB06877.1"/>
    <property type="molecule type" value="Genomic_DNA"/>
</dbReference>
<dbReference type="RefSeq" id="WP_011350515.1">
    <property type="nucleotide sequence ID" value="NC_007510.1"/>
</dbReference>
<dbReference type="SMR" id="Q39KY9"/>
<dbReference type="GeneID" id="45093183"/>
<dbReference type="KEGG" id="bur:Bcep18194_A3275"/>
<dbReference type="PATRIC" id="fig|482957.22.peg.105"/>
<dbReference type="HOGENOM" id="CLU_007831_2_2_4"/>
<dbReference type="Proteomes" id="UP000002705">
    <property type="component" value="Chromosome 1"/>
</dbReference>
<dbReference type="GO" id="GO:0005829">
    <property type="term" value="C:cytosol"/>
    <property type="evidence" value="ECO:0007669"/>
    <property type="project" value="TreeGrafter"/>
</dbReference>
<dbReference type="GO" id="GO:0050660">
    <property type="term" value="F:flavin adenine dinucleotide binding"/>
    <property type="evidence" value="ECO:0007669"/>
    <property type="project" value="UniProtKB-UniRule"/>
</dbReference>
<dbReference type="GO" id="GO:0030488">
    <property type="term" value="P:tRNA methylation"/>
    <property type="evidence" value="ECO:0007669"/>
    <property type="project" value="TreeGrafter"/>
</dbReference>
<dbReference type="GO" id="GO:0002098">
    <property type="term" value="P:tRNA wobble uridine modification"/>
    <property type="evidence" value="ECO:0007669"/>
    <property type="project" value="InterPro"/>
</dbReference>
<dbReference type="FunFam" id="1.10.10.1800:FF:000001">
    <property type="entry name" value="tRNA uridine 5-carboxymethylaminomethyl modification enzyme MnmG"/>
    <property type="match status" value="1"/>
</dbReference>
<dbReference type="FunFam" id="1.10.150.570:FF:000001">
    <property type="entry name" value="tRNA uridine 5-carboxymethylaminomethyl modification enzyme MnmG"/>
    <property type="match status" value="1"/>
</dbReference>
<dbReference type="FunFam" id="3.50.50.60:FF:000002">
    <property type="entry name" value="tRNA uridine 5-carboxymethylaminomethyl modification enzyme MnmG"/>
    <property type="match status" value="1"/>
</dbReference>
<dbReference type="FunFam" id="3.50.50.60:FF:000010">
    <property type="entry name" value="tRNA uridine 5-carboxymethylaminomethyl modification enzyme MnmG"/>
    <property type="match status" value="1"/>
</dbReference>
<dbReference type="Gene3D" id="3.50.50.60">
    <property type="entry name" value="FAD/NAD(P)-binding domain"/>
    <property type="match status" value="2"/>
</dbReference>
<dbReference type="Gene3D" id="1.10.150.570">
    <property type="entry name" value="GidA associated domain, C-terminal subdomain"/>
    <property type="match status" value="1"/>
</dbReference>
<dbReference type="Gene3D" id="1.10.10.1800">
    <property type="entry name" value="tRNA uridine 5-carboxymethylaminomethyl modification enzyme MnmG/GidA"/>
    <property type="match status" value="1"/>
</dbReference>
<dbReference type="HAMAP" id="MF_00129">
    <property type="entry name" value="MnmG_GidA"/>
    <property type="match status" value="1"/>
</dbReference>
<dbReference type="InterPro" id="IPR036188">
    <property type="entry name" value="FAD/NAD-bd_sf"/>
</dbReference>
<dbReference type="InterPro" id="IPR049312">
    <property type="entry name" value="GIDA_C_N"/>
</dbReference>
<dbReference type="InterPro" id="IPR004416">
    <property type="entry name" value="MnmG"/>
</dbReference>
<dbReference type="InterPro" id="IPR002218">
    <property type="entry name" value="MnmG-rel"/>
</dbReference>
<dbReference type="InterPro" id="IPR020595">
    <property type="entry name" value="MnmG-rel_CS"/>
</dbReference>
<dbReference type="InterPro" id="IPR026904">
    <property type="entry name" value="MnmG_C"/>
</dbReference>
<dbReference type="InterPro" id="IPR047001">
    <property type="entry name" value="MnmG_C_subdom"/>
</dbReference>
<dbReference type="InterPro" id="IPR044920">
    <property type="entry name" value="MnmG_C_subdom_sf"/>
</dbReference>
<dbReference type="InterPro" id="IPR040131">
    <property type="entry name" value="MnmG_N"/>
</dbReference>
<dbReference type="NCBIfam" id="TIGR00136">
    <property type="entry name" value="mnmG_gidA"/>
    <property type="match status" value="1"/>
</dbReference>
<dbReference type="PANTHER" id="PTHR11806">
    <property type="entry name" value="GLUCOSE INHIBITED DIVISION PROTEIN A"/>
    <property type="match status" value="1"/>
</dbReference>
<dbReference type="PANTHER" id="PTHR11806:SF0">
    <property type="entry name" value="PROTEIN MTO1 HOMOLOG, MITOCHONDRIAL"/>
    <property type="match status" value="1"/>
</dbReference>
<dbReference type="Pfam" id="PF01134">
    <property type="entry name" value="GIDA"/>
    <property type="match status" value="1"/>
</dbReference>
<dbReference type="Pfam" id="PF21680">
    <property type="entry name" value="GIDA_C_1st"/>
    <property type="match status" value="1"/>
</dbReference>
<dbReference type="Pfam" id="PF13932">
    <property type="entry name" value="SAM_GIDA_C"/>
    <property type="match status" value="1"/>
</dbReference>
<dbReference type="SMART" id="SM01228">
    <property type="entry name" value="GIDA_assoc_3"/>
    <property type="match status" value="1"/>
</dbReference>
<dbReference type="SUPFAM" id="SSF51905">
    <property type="entry name" value="FAD/NAD(P)-binding domain"/>
    <property type="match status" value="1"/>
</dbReference>
<dbReference type="PROSITE" id="PS01280">
    <property type="entry name" value="GIDA_1"/>
    <property type="match status" value="1"/>
</dbReference>
<dbReference type="PROSITE" id="PS01281">
    <property type="entry name" value="GIDA_2"/>
    <property type="match status" value="1"/>
</dbReference>
<organism>
    <name type="scientific">Burkholderia lata (strain ATCC 17760 / DSM 23089 / LMG 22485 / NCIMB 9086 / R18194 / 383)</name>
    <dbReference type="NCBI Taxonomy" id="482957"/>
    <lineage>
        <taxon>Bacteria</taxon>
        <taxon>Pseudomonadati</taxon>
        <taxon>Pseudomonadota</taxon>
        <taxon>Betaproteobacteria</taxon>
        <taxon>Burkholderiales</taxon>
        <taxon>Burkholderiaceae</taxon>
        <taxon>Burkholderia</taxon>
        <taxon>Burkholderia cepacia complex</taxon>
    </lineage>
</organism>
<accession>Q39KY9</accession>
<sequence>MLFPTEFDVIVVGGGHAGTEAALASARMGAKTLLLTHNIETLGQMSCNPSIGGIGKGHLVKEVDALGGAMAAATDESGIQFRILNSSKGPAVRATRAQADRILYKAAIRHRLENQPNLWLFQQAVDDLMVEGDRVVGAVTQIGIRFRARAVVLTAGTFLDGKIHVGLNNYTGGRAGDPAAVSLSSRLKELKLPQGRLKTGTPPRIDGRSIDFSQLTEQPGDLDPVPVFSFLGRAEQHPQQLPCWVTHTNERTHDIIRGGLDRSPMYTGVIEGVGPRYCPSIEDKIHRFASKESHQIFLEPEGLTTNEFYPNGISTSLPFDVQLELVHSMRGLENAHILRPGYAIEYDYFDPRALKASLETKAINGLFFAGQINGTTGYEEAAAQGLLAGLNAGRYVQEKDAWCPRRDQAYLGVLVDDLVTRGVAEPYRMFTSRAEYRLSLREDNADMRLTEIGRELGLVDDTRWDAFSRKRDAVSRETERLKSTWVTPKTLPPEEATALLGKAIDHEYSLAELLRRPGISYDGVCGLKGGECGPAEPLADDPVLLEQIKEQVEIGIKYQGYIERQASEIERNDANENTRLPDGIDYREVRGLSFEVSQKLNEFRPETIGQASRISGVTPAAISLLMVHLKRRGLGRRNGTAEAATEQGDGAVPTQQ</sequence>
<protein>
    <recommendedName>
        <fullName evidence="1">tRNA uridine 5-carboxymethylaminomethyl modification enzyme MnmG</fullName>
    </recommendedName>
    <alternativeName>
        <fullName evidence="1">Glucose-inhibited division protein A</fullName>
    </alternativeName>
</protein>
<reference key="1">
    <citation type="submission" date="2005-10" db="EMBL/GenBank/DDBJ databases">
        <title>Complete sequence of chromosome 1 of Burkholderia sp. 383.</title>
        <authorList>
            <consortium name="US DOE Joint Genome Institute"/>
            <person name="Copeland A."/>
            <person name="Lucas S."/>
            <person name="Lapidus A."/>
            <person name="Barry K."/>
            <person name="Detter J.C."/>
            <person name="Glavina T."/>
            <person name="Hammon N."/>
            <person name="Israni S."/>
            <person name="Pitluck S."/>
            <person name="Chain P."/>
            <person name="Malfatti S."/>
            <person name="Shin M."/>
            <person name="Vergez L."/>
            <person name="Schmutz J."/>
            <person name="Larimer F."/>
            <person name="Land M."/>
            <person name="Kyrpides N."/>
            <person name="Lykidis A."/>
            <person name="Richardson P."/>
        </authorList>
    </citation>
    <scope>NUCLEOTIDE SEQUENCE [LARGE SCALE GENOMIC DNA]</scope>
    <source>
        <strain>ATCC 17760 / DSM 23089 / LMG 22485 / NCIMB 9086 / R18194 / 383</strain>
    </source>
</reference>
<gene>
    <name evidence="1" type="primary">mnmG</name>
    <name evidence="1" type="synonym">gidA</name>
    <name type="ordered locus">Bcep18194_A3275</name>
</gene>
<evidence type="ECO:0000255" key="1">
    <source>
        <dbReference type="HAMAP-Rule" id="MF_00129"/>
    </source>
</evidence>
<evidence type="ECO:0000256" key="2">
    <source>
        <dbReference type="SAM" id="MobiDB-lite"/>
    </source>
</evidence>